<protein>
    <recommendedName>
        <fullName>DNA repair protein RecN</fullName>
    </recommendedName>
    <alternativeName>
        <fullName>Recombination protein N</fullName>
    </alternativeName>
</protein>
<dbReference type="EMBL" id="AB023411">
    <property type="protein sequence ID" value="BAA76704.1"/>
    <property type="molecule type" value="Genomic_DNA"/>
</dbReference>
<dbReference type="EMBL" id="AE000513">
    <property type="protein sequence ID" value="AAF11043.1"/>
    <property type="molecule type" value="Genomic_DNA"/>
</dbReference>
<dbReference type="PIR" id="A75391">
    <property type="entry name" value="A75391"/>
</dbReference>
<dbReference type="RefSeq" id="NP_295200.1">
    <property type="nucleotide sequence ID" value="NC_001263.1"/>
</dbReference>
<dbReference type="RefSeq" id="WP_010888116.1">
    <property type="nucleotide sequence ID" value="NC_001263.1"/>
</dbReference>
<dbReference type="PDB" id="4ABX">
    <property type="method" value="X-ray"/>
    <property type="resolution" value="2.04 A"/>
    <property type="chains" value="A/B/C/D=196-364"/>
</dbReference>
<dbReference type="PDB" id="4ABY">
    <property type="method" value="X-ray"/>
    <property type="resolution" value="3.00 A"/>
    <property type="chains" value="A/B/C/D=1-195, A/B/C/D=365-564"/>
</dbReference>
<dbReference type="PDB" id="4AD8">
    <property type="method" value="X-ray"/>
    <property type="resolution" value="4.00 A"/>
    <property type="chains" value="A=1-237, A=305-564"/>
</dbReference>
<dbReference type="PDBsum" id="4ABX"/>
<dbReference type="PDBsum" id="4ABY"/>
<dbReference type="PDBsum" id="4AD8"/>
<dbReference type="SMR" id="Q9WXF2"/>
<dbReference type="DIP" id="DIP-59988N"/>
<dbReference type="FunCoup" id="Q9WXF2">
    <property type="interactions" value="309"/>
</dbReference>
<dbReference type="STRING" id="243230.DR_1477"/>
<dbReference type="PaxDb" id="243230-DR_1477"/>
<dbReference type="EnsemblBacteria" id="AAF11043">
    <property type="protein sequence ID" value="AAF11043"/>
    <property type="gene ID" value="DR_1477"/>
</dbReference>
<dbReference type="GeneID" id="69517716"/>
<dbReference type="KEGG" id="dra:DR_1477"/>
<dbReference type="PATRIC" id="fig|243230.17.peg.1677"/>
<dbReference type="eggNOG" id="COG0497">
    <property type="taxonomic scope" value="Bacteria"/>
</dbReference>
<dbReference type="HOGENOM" id="CLU_018297_3_0_0"/>
<dbReference type="InParanoid" id="Q9WXF2"/>
<dbReference type="OrthoDB" id="9806954at2"/>
<dbReference type="EvolutionaryTrace" id="Q9WXF2"/>
<dbReference type="Proteomes" id="UP000002524">
    <property type="component" value="Chromosome 1"/>
</dbReference>
<dbReference type="GO" id="GO:0043590">
    <property type="term" value="C:bacterial nucleoid"/>
    <property type="evidence" value="ECO:0000318"/>
    <property type="project" value="GO_Central"/>
</dbReference>
<dbReference type="GO" id="GO:0005524">
    <property type="term" value="F:ATP binding"/>
    <property type="evidence" value="ECO:0007669"/>
    <property type="project" value="UniProtKB-KW"/>
</dbReference>
<dbReference type="GO" id="GO:0042802">
    <property type="term" value="F:identical protein binding"/>
    <property type="evidence" value="ECO:0000353"/>
    <property type="project" value="IntAct"/>
</dbReference>
<dbReference type="GO" id="GO:0006310">
    <property type="term" value="P:DNA recombination"/>
    <property type="evidence" value="ECO:0007669"/>
    <property type="project" value="InterPro"/>
</dbReference>
<dbReference type="GO" id="GO:0006281">
    <property type="term" value="P:DNA repair"/>
    <property type="evidence" value="ECO:0007669"/>
    <property type="project" value="UniProtKB-KW"/>
</dbReference>
<dbReference type="GO" id="GO:0009432">
    <property type="term" value="P:SOS response"/>
    <property type="evidence" value="ECO:0000318"/>
    <property type="project" value="GO_Central"/>
</dbReference>
<dbReference type="CDD" id="cd03241">
    <property type="entry name" value="ABC_RecN"/>
    <property type="match status" value="2"/>
</dbReference>
<dbReference type="FunFam" id="3.40.50.300:FF:005423">
    <property type="entry name" value="DNA repair protein RecN"/>
    <property type="match status" value="1"/>
</dbReference>
<dbReference type="Gene3D" id="3.40.50.300">
    <property type="entry name" value="P-loop containing nucleotide triphosphate hydrolases"/>
    <property type="match status" value="2"/>
</dbReference>
<dbReference type="InterPro" id="IPR004604">
    <property type="entry name" value="DNA_recomb/repair_RecN"/>
</dbReference>
<dbReference type="InterPro" id="IPR027417">
    <property type="entry name" value="P-loop_NTPase"/>
</dbReference>
<dbReference type="InterPro" id="IPR003395">
    <property type="entry name" value="RecF/RecN/SMC_N"/>
</dbReference>
<dbReference type="NCBIfam" id="TIGR00634">
    <property type="entry name" value="recN"/>
    <property type="match status" value="1"/>
</dbReference>
<dbReference type="PANTHER" id="PTHR11059">
    <property type="entry name" value="DNA REPAIR PROTEIN RECN"/>
    <property type="match status" value="1"/>
</dbReference>
<dbReference type="PANTHER" id="PTHR11059:SF0">
    <property type="entry name" value="DNA REPAIR PROTEIN RECN"/>
    <property type="match status" value="1"/>
</dbReference>
<dbReference type="Pfam" id="PF02463">
    <property type="entry name" value="SMC_N"/>
    <property type="match status" value="1"/>
</dbReference>
<dbReference type="PIRSF" id="PIRSF003128">
    <property type="entry name" value="RecN"/>
    <property type="match status" value="1"/>
</dbReference>
<dbReference type="SUPFAM" id="SSF52540">
    <property type="entry name" value="P-loop containing nucleoside triphosphate hydrolases"/>
    <property type="match status" value="1"/>
</dbReference>
<comment type="function">
    <text evidence="1">May be involved in recombinational repair of damaged DNA.</text>
</comment>
<comment type="interaction">
    <interactant intactId="EBI-16018526">
        <id>Q9WXF2</id>
    </interactant>
    <interactant intactId="EBI-16018526">
        <id>Q9WXF2</id>
        <label>recN</label>
    </interactant>
    <organismsDiffer>false</organismsDiffer>
    <experiments>6</experiments>
</comment>
<comment type="similarity">
    <text evidence="4">Belongs to the RecN family.</text>
</comment>
<reference key="1">
    <citation type="submission" date="1999-02" db="EMBL/GenBank/DDBJ databases">
        <title>Deinococcus radiodurans recN gene: a molecular cloning and gene disruption analysis.</title>
        <authorList>
            <person name="Funayama T."/>
            <person name="Narumi I."/>
            <person name="Kikuchi M."/>
            <person name="Kitayama S."/>
            <person name="Watanabe H."/>
            <person name="Yamamoto K."/>
        </authorList>
    </citation>
    <scope>NUCLEOTIDE SEQUENCE [GENOMIC DNA]</scope>
    <source>
        <strain>KD8301</strain>
    </source>
</reference>
<reference key="2">
    <citation type="journal article" date="1999" name="Science">
        <title>Genome sequence of the radioresistant bacterium Deinococcus radiodurans R1.</title>
        <authorList>
            <person name="White O."/>
            <person name="Eisen J.A."/>
            <person name="Heidelberg J.F."/>
            <person name="Hickey E.K."/>
            <person name="Peterson J.D."/>
            <person name="Dodson R.J."/>
            <person name="Haft D.H."/>
            <person name="Gwinn M.L."/>
            <person name="Nelson W.C."/>
            <person name="Richardson D.L."/>
            <person name="Moffat K.S."/>
            <person name="Qin H."/>
            <person name="Jiang L."/>
            <person name="Pamphile W."/>
            <person name="Crosby M."/>
            <person name="Shen M."/>
            <person name="Vamathevan J.J."/>
            <person name="Lam P."/>
            <person name="McDonald L.A."/>
            <person name="Utterback T.R."/>
            <person name="Zalewski C."/>
            <person name="Makarova K.S."/>
            <person name="Aravind L."/>
            <person name="Daly M.J."/>
            <person name="Minton K.W."/>
            <person name="Fleischmann R.D."/>
            <person name="Ketchum K.A."/>
            <person name="Nelson K.E."/>
            <person name="Salzberg S.L."/>
            <person name="Smith H.O."/>
            <person name="Venter J.C."/>
            <person name="Fraser C.M."/>
        </authorList>
    </citation>
    <scope>NUCLEOTIDE SEQUENCE [LARGE SCALE GENOMIC DNA]</scope>
    <source>
        <strain>ATCC 13939 / DSM 20539 / JCM 16871 / CCUG 27074 / LMG 4051 / NBRC 15346 / NCIMB 9279 / VKM B-1422 / R1</strain>
    </source>
</reference>
<evidence type="ECO:0000250" key="1"/>
<evidence type="ECO:0000255" key="2"/>
<evidence type="ECO:0000256" key="3">
    <source>
        <dbReference type="SAM" id="MobiDB-lite"/>
    </source>
</evidence>
<evidence type="ECO:0000305" key="4"/>
<evidence type="ECO:0007829" key="5">
    <source>
        <dbReference type="PDB" id="4ABX"/>
    </source>
</evidence>
<evidence type="ECO:0007829" key="6">
    <source>
        <dbReference type="PDB" id="4ABY"/>
    </source>
</evidence>
<proteinExistence type="evidence at protein level"/>
<organism>
    <name type="scientific">Deinococcus radiodurans (strain ATCC 13939 / DSM 20539 / JCM 16871 / CCUG 27074 / LMG 4051 / NBRC 15346 / NCIMB 9279 / VKM B-1422 / R1)</name>
    <dbReference type="NCBI Taxonomy" id="243230"/>
    <lineage>
        <taxon>Bacteria</taxon>
        <taxon>Thermotogati</taxon>
        <taxon>Deinococcota</taxon>
        <taxon>Deinococci</taxon>
        <taxon>Deinococcales</taxon>
        <taxon>Deinococcaceae</taxon>
        <taxon>Deinococcus</taxon>
    </lineage>
</organism>
<keyword id="KW-0002">3D-structure</keyword>
<keyword id="KW-0067">ATP-binding</keyword>
<keyword id="KW-0227">DNA damage</keyword>
<keyword id="KW-0234">DNA repair</keyword>
<keyword id="KW-0547">Nucleotide-binding</keyword>
<keyword id="KW-1185">Reference proteome</keyword>
<accession>Q9WXF2</accession>
<gene>
    <name type="primary">recN</name>
    <name type="ordered locus">DR_1477</name>
</gene>
<name>RECN_DEIRA</name>
<feature type="chain" id="PRO_0000188016" description="DNA repair protein RecN">
    <location>
        <begin position="1"/>
        <end position="564"/>
    </location>
</feature>
<feature type="region of interest" description="Disordered" evidence="3">
    <location>
        <begin position="1"/>
        <end position="32"/>
    </location>
</feature>
<feature type="compositionally biased region" description="Low complexity" evidence="3">
    <location>
        <begin position="10"/>
        <end position="20"/>
    </location>
</feature>
<feature type="binding site" evidence="2">
    <location>
        <begin position="61"/>
        <end position="68"/>
    </location>
    <ligand>
        <name>ATP</name>
        <dbReference type="ChEBI" id="CHEBI:30616"/>
    </ligand>
</feature>
<feature type="strand" evidence="6">
    <location>
        <begin position="36"/>
        <end position="42"/>
    </location>
</feature>
<feature type="strand" evidence="6">
    <location>
        <begin position="45"/>
        <end position="51"/>
    </location>
</feature>
<feature type="strand" evidence="6">
    <location>
        <begin position="54"/>
        <end position="62"/>
    </location>
</feature>
<feature type="helix" evidence="6">
    <location>
        <begin position="63"/>
        <end position="70"/>
    </location>
</feature>
<feature type="helix" evidence="6">
    <location>
        <begin position="72"/>
        <end position="77"/>
    </location>
</feature>
<feature type="helix" evidence="6">
    <location>
        <begin position="84"/>
        <end position="86"/>
    </location>
</feature>
<feature type="strand" evidence="6">
    <location>
        <begin position="92"/>
        <end position="99"/>
    </location>
</feature>
<feature type="strand" evidence="6">
    <location>
        <begin position="110"/>
        <end position="116"/>
    </location>
</feature>
<feature type="strand" evidence="6">
    <location>
        <begin position="121"/>
        <end position="125"/>
    </location>
</feature>
<feature type="strand" evidence="6">
    <location>
        <begin position="128"/>
        <end position="130"/>
    </location>
</feature>
<feature type="helix" evidence="6">
    <location>
        <begin position="132"/>
        <end position="139"/>
    </location>
</feature>
<feature type="turn" evidence="6">
    <location>
        <begin position="140"/>
        <end position="142"/>
    </location>
</feature>
<feature type="strand" evidence="6">
    <location>
        <begin position="143"/>
        <end position="146"/>
    </location>
</feature>
<feature type="turn" evidence="6">
    <location>
        <begin position="147"/>
        <end position="149"/>
    </location>
</feature>
<feature type="turn" evidence="6">
    <location>
        <begin position="151"/>
        <end position="154"/>
    </location>
</feature>
<feature type="helix" evidence="6">
    <location>
        <begin position="157"/>
        <end position="165"/>
    </location>
</feature>
<feature type="helix" evidence="6">
    <location>
        <begin position="169"/>
        <end position="191"/>
    </location>
</feature>
<feature type="helix" evidence="5">
    <location>
        <begin position="196"/>
        <end position="216"/>
    </location>
</feature>
<feature type="turn" evidence="5">
    <location>
        <begin position="220"/>
        <end position="222"/>
    </location>
</feature>
<feature type="helix" evidence="5">
    <location>
        <begin position="223"/>
        <end position="250"/>
    </location>
</feature>
<feature type="strand" evidence="5">
    <location>
        <begin position="253"/>
        <end position="255"/>
    </location>
</feature>
<feature type="helix" evidence="5">
    <location>
        <begin position="257"/>
        <end position="272"/>
    </location>
</feature>
<feature type="helix" evidence="5">
    <location>
        <begin position="276"/>
        <end position="304"/>
    </location>
</feature>
<feature type="helix" evidence="5">
    <location>
        <begin position="310"/>
        <end position="330"/>
    </location>
</feature>
<feature type="helix" evidence="5">
    <location>
        <begin position="334"/>
        <end position="358"/>
    </location>
</feature>
<feature type="helix" evidence="6">
    <location>
        <begin position="365"/>
        <end position="398"/>
    </location>
</feature>
<feature type="turn" evidence="6">
    <location>
        <begin position="399"/>
        <end position="402"/>
    </location>
</feature>
<feature type="strand" evidence="6">
    <location>
        <begin position="407"/>
        <end position="419"/>
    </location>
</feature>
<feature type="strand" evidence="6">
    <location>
        <begin position="422"/>
        <end position="435"/>
    </location>
</feature>
<feature type="helix" evidence="6">
    <location>
        <begin position="441"/>
        <end position="443"/>
    </location>
</feature>
<feature type="helix" evidence="6">
    <location>
        <begin position="447"/>
        <end position="461"/>
    </location>
</feature>
<feature type="strand" evidence="6">
    <location>
        <begin position="464"/>
        <end position="472"/>
    </location>
</feature>
<feature type="turn" evidence="6">
    <location>
        <begin position="473"/>
        <end position="476"/>
    </location>
</feature>
<feature type="helix" evidence="6">
    <location>
        <begin position="479"/>
        <end position="492"/>
    </location>
</feature>
<feature type="turn" evidence="6">
    <location>
        <begin position="493"/>
        <end position="495"/>
    </location>
</feature>
<feature type="strand" evidence="6">
    <location>
        <begin position="496"/>
        <end position="501"/>
    </location>
</feature>
<feature type="helix" evidence="6">
    <location>
        <begin position="505"/>
        <end position="508"/>
    </location>
</feature>
<feature type="strand" evidence="6">
    <location>
        <begin position="512"/>
        <end position="522"/>
    </location>
</feature>
<feature type="strand" evidence="6">
    <location>
        <begin position="525"/>
        <end position="532"/>
    </location>
</feature>
<feature type="helix" evidence="6">
    <location>
        <begin position="536"/>
        <end position="547"/>
    </location>
</feature>
<feature type="helix" evidence="6">
    <location>
        <begin position="552"/>
        <end position="562"/>
    </location>
</feature>
<sequence length="564" mass="59799">MTRKARTPKAAPVPEAVAVVEPPPPDAAPTGPRLSRLEIRNLATITQLELELGGGFCAFTGETGAGKSIIVDALGLLLGGRANHDLIRSGEKELLVTGFWGDGDESEADSASRRLSSAGRGAARLSGEVVSVRELQEWAQGRLTIHWQHSAVSLLSPANQRGLLDRRVTKEAQAYAAAHAAWREAVSRLERLQASQRERARQIDLLAFQVQEISEVSPDPGEEEGLNTELSRLSNLHTIAQAAAGGVELLSDGDLNAAGLIGEAVRALNAGAKYDETVMQLQNELRAALESVQAIAGELRDVAEGSAADPEALDRVEARLSALSKLKNKYGPTLEDVVEFGAQAAEELAGLEEDERDAGSLQADVDALHAELLKVGQALDAAREREAEPLVDSLLAVIRELGMPHARMEFALSALAEPAAYGLSDVLLRFSANPGEELGPLSDVASGGELSRVMLAVSTVLGADTPSVVFDEVDAGIGGAAAIAVAEQLSRLADTRQVLVVTHLAQIAARAHHHYKVEKQVEDGRTVSHVRLLTGDERLEEIARMLSGNTSEAALEHARELLAG</sequence>